<protein>
    <recommendedName>
        <fullName evidence="1">Glycerol kinase</fullName>
        <ecNumber evidence="1">2.7.1.30</ecNumber>
    </recommendedName>
    <alternativeName>
        <fullName evidence="1">ATP:glycerol 3-phosphotransferase</fullName>
    </alternativeName>
    <alternativeName>
        <fullName evidence="1">Glycerokinase</fullName>
        <shortName evidence="1">GK</shortName>
    </alternativeName>
</protein>
<comment type="function">
    <text evidence="1">Key enzyme in the regulation of glycerol uptake and metabolism. Catalyzes the phosphorylation of glycerol to yield sn-glycerol 3-phosphate.</text>
</comment>
<comment type="catalytic activity">
    <reaction evidence="1">
        <text>glycerol + ATP = sn-glycerol 3-phosphate + ADP + H(+)</text>
        <dbReference type="Rhea" id="RHEA:21644"/>
        <dbReference type="ChEBI" id="CHEBI:15378"/>
        <dbReference type="ChEBI" id="CHEBI:17754"/>
        <dbReference type="ChEBI" id="CHEBI:30616"/>
        <dbReference type="ChEBI" id="CHEBI:57597"/>
        <dbReference type="ChEBI" id="CHEBI:456216"/>
        <dbReference type="EC" id="2.7.1.30"/>
    </reaction>
</comment>
<comment type="activity regulation">
    <text evidence="1">Inhibited by fructose 1,6-bisphosphate (FBP).</text>
</comment>
<comment type="pathway">
    <text evidence="1">Polyol metabolism; glycerol degradation via glycerol kinase pathway; sn-glycerol 3-phosphate from glycerol: step 1/1.</text>
</comment>
<comment type="similarity">
    <text evidence="1">Belongs to the FGGY kinase family.</text>
</comment>
<gene>
    <name evidence="1" type="primary">glpK</name>
    <name type="ordered locus">Rsph17025_1200</name>
</gene>
<evidence type="ECO:0000255" key="1">
    <source>
        <dbReference type="HAMAP-Rule" id="MF_00186"/>
    </source>
</evidence>
<accession>A4WRT7</accession>
<name>GLPK_CERS5</name>
<organism>
    <name type="scientific">Cereibacter sphaeroides (strain ATCC 17025 / ATH 2.4.3)</name>
    <name type="common">Rhodobacter sphaeroides</name>
    <dbReference type="NCBI Taxonomy" id="349102"/>
    <lineage>
        <taxon>Bacteria</taxon>
        <taxon>Pseudomonadati</taxon>
        <taxon>Pseudomonadota</taxon>
        <taxon>Alphaproteobacteria</taxon>
        <taxon>Rhodobacterales</taxon>
        <taxon>Paracoccaceae</taxon>
        <taxon>Cereibacter</taxon>
    </lineage>
</organism>
<reference key="1">
    <citation type="submission" date="2007-04" db="EMBL/GenBank/DDBJ databases">
        <title>Complete sequence of chromosome of Rhodobacter sphaeroides ATCC 17025.</title>
        <authorList>
            <consortium name="US DOE Joint Genome Institute"/>
            <person name="Copeland A."/>
            <person name="Lucas S."/>
            <person name="Lapidus A."/>
            <person name="Barry K."/>
            <person name="Detter J.C."/>
            <person name="Glavina del Rio T."/>
            <person name="Hammon N."/>
            <person name="Israni S."/>
            <person name="Dalin E."/>
            <person name="Tice H."/>
            <person name="Pitluck S."/>
            <person name="Chertkov O."/>
            <person name="Brettin T."/>
            <person name="Bruce D."/>
            <person name="Han C."/>
            <person name="Schmutz J."/>
            <person name="Larimer F."/>
            <person name="Land M."/>
            <person name="Hauser L."/>
            <person name="Kyrpides N."/>
            <person name="Kim E."/>
            <person name="Richardson P."/>
            <person name="Mackenzie C."/>
            <person name="Choudhary M."/>
            <person name="Donohue T.J."/>
            <person name="Kaplan S."/>
        </authorList>
    </citation>
    <scope>NUCLEOTIDE SEQUENCE [LARGE SCALE GENOMIC DNA]</scope>
    <source>
        <strain>ATCC 17025 / ATH 2.4.3</strain>
    </source>
</reference>
<feature type="chain" id="PRO_1000020771" description="Glycerol kinase">
    <location>
        <begin position="1"/>
        <end position="493"/>
    </location>
</feature>
<feature type="binding site" evidence="1">
    <location>
        <position position="11"/>
    </location>
    <ligand>
        <name>ADP</name>
        <dbReference type="ChEBI" id="CHEBI:456216"/>
    </ligand>
</feature>
<feature type="binding site" evidence="1">
    <location>
        <position position="11"/>
    </location>
    <ligand>
        <name>ATP</name>
        <dbReference type="ChEBI" id="CHEBI:30616"/>
    </ligand>
</feature>
<feature type="binding site" evidence="1">
    <location>
        <position position="11"/>
    </location>
    <ligand>
        <name>sn-glycerol 3-phosphate</name>
        <dbReference type="ChEBI" id="CHEBI:57597"/>
    </ligand>
</feature>
<feature type="binding site" evidence="1">
    <location>
        <position position="12"/>
    </location>
    <ligand>
        <name>ATP</name>
        <dbReference type="ChEBI" id="CHEBI:30616"/>
    </ligand>
</feature>
<feature type="binding site" evidence="1">
    <location>
        <position position="13"/>
    </location>
    <ligand>
        <name>ATP</name>
        <dbReference type="ChEBI" id="CHEBI:30616"/>
    </ligand>
</feature>
<feature type="binding site" evidence="1">
    <location>
        <position position="15"/>
    </location>
    <ligand>
        <name>ADP</name>
        <dbReference type="ChEBI" id="CHEBI:456216"/>
    </ligand>
</feature>
<feature type="binding site" evidence="1">
    <location>
        <position position="80"/>
    </location>
    <ligand>
        <name>glycerol</name>
        <dbReference type="ChEBI" id="CHEBI:17754"/>
    </ligand>
</feature>
<feature type="binding site" evidence="1">
    <location>
        <position position="80"/>
    </location>
    <ligand>
        <name>sn-glycerol 3-phosphate</name>
        <dbReference type="ChEBI" id="CHEBI:57597"/>
    </ligand>
</feature>
<feature type="binding site" evidence="1">
    <location>
        <position position="81"/>
    </location>
    <ligand>
        <name>glycerol</name>
        <dbReference type="ChEBI" id="CHEBI:17754"/>
    </ligand>
</feature>
<feature type="binding site" evidence="1">
    <location>
        <position position="81"/>
    </location>
    <ligand>
        <name>sn-glycerol 3-phosphate</name>
        <dbReference type="ChEBI" id="CHEBI:57597"/>
    </ligand>
</feature>
<feature type="binding site" evidence="1">
    <location>
        <position position="132"/>
    </location>
    <ligand>
        <name>glycerol</name>
        <dbReference type="ChEBI" id="CHEBI:17754"/>
    </ligand>
</feature>
<feature type="binding site" evidence="1">
    <location>
        <position position="132"/>
    </location>
    <ligand>
        <name>sn-glycerol 3-phosphate</name>
        <dbReference type="ChEBI" id="CHEBI:57597"/>
    </ligand>
</feature>
<feature type="binding site" evidence="1">
    <location>
        <position position="241"/>
    </location>
    <ligand>
        <name>glycerol</name>
        <dbReference type="ChEBI" id="CHEBI:17754"/>
    </ligand>
</feature>
<feature type="binding site" evidence="1">
    <location>
        <position position="241"/>
    </location>
    <ligand>
        <name>sn-glycerol 3-phosphate</name>
        <dbReference type="ChEBI" id="CHEBI:57597"/>
    </ligand>
</feature>
<feature type="binding site" evidence="1">
    <location>
        <position position="242"/>
    </location>
    <ligand>
        <name>glycerol</name>
        <dbReference type="ChEBI" id="CHEBI:17754"/>
    </ligand>
</feature>
<feature type="binding site" evidence="1">
    <location>
        <position position="263"/>
    </location>
    <ligand>
        <name>ADP</name>
        <dbReference type="ChEBI" id="CHEBI:456216"/>
    </ligand>
</feature>
<feature type="binding site" evidence="1">
    <location>
        <position position="263"/>
    </location>
    <ligand>
        <name>ATP</name>
        <dbReference type="ChEBI" id="CHEBI:30616"/>
    </ligand>
</feature>
<feature type="binding site" evidence="1">
    <location>
        <position position="306"/>
    </location>
    <ligand>
        <name>ADP</name>
        <dbReference type="ChEBI" id="CHEBI:456216"/>
    </ligand>
</feature>
<feature type="binding site" evidence="1">
    <location>
        <position position="306"/>
    </location>
    <ligand>
        <name>ATP</name>
        <dbReference type="ChEBI" id="CHEBI:30616"/>
    </ligand>
</feature>
<feature type="binding site" evidence="1">
    <location>
        <position position="310"/>
    </location>
    <ligand>
        <name>ATP</name>
        <dbReference type="ChEBI" id="CHEBI:30616"/>
    </ligand>
</feature>
<feature type="binding site" evidence="1">
    <location>
        <position position="408"/>
    </location>
    <ligand>
        <name>ADP</name>
        <dbReference type="ChEBI" id="CHEBI:456216"/>
    </ligand>
</feature>
<feature type="binding site" evidence="1">
    <location>
        <position position="408"/>
    </location>
    <ligand>
        <name>ATP</name>
        <dbReference type="ChEBI" id="CHEBI:30616"/>
    </ligand>
</feature>
<dbReference type="EC" id="2.7.1.30" evidence="1"/>
<dbReference type="EMBL" id="CP000661">
    <property type="protein sequence ID" value="ABP70101.1"/>
    <property type="molecule type" value="Genomic_DNA"/>
</dbReference>
<dbReference type="SMR" id="A4WRT7"/>
<dbReference type="STRING" id="349102.Rsph17025_1200"/>
<dbReference type="KEGG" id="rsq:Rsph17025_1200"/>
<dbReference type="eggNOG" id="COG0554">
    <property type="taxonomic scope" value="Bacteria"/>
</dbReference>
<dbReference type="HOGENOM" id="CLU_009281_2_3_5"/>
<dbReference type="BioCyc" id="RSPH349102:G1G8M-1228-MONOMER"/>
<dbReference type="UniPathway" id="UPA00618">
    <property type="reaction ID" value="UER00672"/>
</dbReference>
<dbReference type="GO" id="GO:0005829">
    <property type="term" value="C:cytosol"/>
    <property type="evidence" value="ECO:0007669"/>
    <property type="project" value="TreeGrafter"/>
</dbReference>
<dbReference type="GO" id="GO:0005524">
    <property type="term" value="F:ATP binding"/>
    <property type="evidence" value="ECO:0007669"/>
    <property type="project" value="UniProtKB-UniRule"/>
</dbReference>
<dbReference type="GO" id="GO:0004370">
    <property type="term" value="F:glycerol kinase activity"/>
    <property type="evidence" value="ECO:0000250"/>
    <property type="project" value="UniProtKB"/>
</dbReference>
<dbReference type="GO" id="GO:0019563">
    <property type="term" value="P:glycerol catabolic process"/>
    <property type="evidence" value="ECO:0007669"/>
    <property type="project" value="UniProtKB-UniRule"/>
</dbReference>
<dbReference type="GO" id="GO:0006071">
    <property type="term" value="P:glycerol metabolic process"/>
    <property type="evidence" value="ECO:0000250"/>
    <property type="project" value="UniProtKB"/>
</dbReference>
<dbReference type="GO" id="GO:0006072">
    <property type="term" value="P:glycerol-3-phosphate metabolic process"/>
    <property type="evidence" value="ECO:0007669"/>
    <property type="project" value="InterPro"/>
</dbReference>
<dbReference type="CDD" id="cd07786">
    <property type="entry name" value="FGGY_EcGK_like"/>
    <property type="match status" value="1"/>
</dbReference>
<dbReference type="FunFam" id="3.30.420.40:FF:000007">
    <property type="entry name" value="Glycerol kinase"/>
    <property type="match status" value="1"/>
</dbReference>
<dbReference type="FunFam" id="3.30.420.40:FF:000008">
    <property type="entry name" value="Glycerol kinase"/>
    <property type="match status" value="1"/>
</dbReference>
<dbReference type="Gene3D" id="3.30.420.40">
    <property type="match status" value="2"/>
</dbReference>
<dbReference type="HAMAP" id="MF_00186">
    <property type="entry name" value="Glycerol_kin"/>
    <property type="match status" value="1"/>
</dbReference>
<dbReference type="InterPro" id="IPR043129">
    <property type="entry name" value="ATPase_NBD"/>
</dbReference>
<dbReference type="InterPro" id="IPR000577">
    <property type="entry name" value="Carb_kinase_FGGY"/>
</dbReference>
<dbReference type="InterPro" id="IPR018483">
    <property type="entry name" value="Carb_kinase_FGGY_CS"/>
</dbReference>
<dbReference type="InterPro" id="IPR018485">
    <property type="entry name" value="FGGY_C"/>
</dbReference>
<dbReference type="InterPro" id="IPR018484">
    <property type="entry name" value="FGGY_N"/>
</dbReference>
<dbReference type="InterPro" id="IPR005999">
    <property type="entry name" value="Glycerol_kin"/>
</dbReference>
<dbReference type="NCBIfam" id="TIGR01311">
    <property type="entry name" value="glycerol_kin"/>
    <property type="match status" value="1"/>
</dbReference>
<dbReference type="NCBIfam" id="NF000756">
    <property type="entry name" value="PRK00047.1"/>
    <property type="match status" value="1"/>
</dbReference>
<dbReference type="PANTHER" id="PTHR10196:SF78">
    <property type="entry name" value="GLYCEROL KINASE"/>
    <property type="match status" value="1"/>
</dbReference>
<dbReference type="PANTHER" id="PTHR10196">
    <property type="entry name" value="SUGAR KINASE"/>
    <property type="match status" value="1"/>
</dbReference>
<dbReference type="Pfam" id="PF02782">
    <property type="entry name" value="FGGY_C"/>
    <property type="match status" value="1"/>
</dbReference>
<dbReference type="Pfam" id="PF00370">
    <property type="entry name" value="FGGY_N"/>
    <property type="match status" value="1"/>
</dbReference>
<dbReference type="PIRSF" id="PIRSF000538">
    <property type="entry name" value="GlpK"/>
    <property type="match status" value="1"/>
</dbReference>
<dbReference type="SUPFAM" id="SSF53067">
    <property type="entry name" value="Actin-like ATPase domain"/>
    <property type="match status" value="2"/>
</dbReference>
<dbReference type="PROSITE" id="PS00933">
    <property type="entry name" value="FGGY_KINASES_1"/>
    <property type="match status" value="1"/>
</dbReference>
<dbReference type="PROSITE" id="PS00445">
    <property type="entry name" value="FGGY_KINASES_2"/>
    <property type="match status" value="1"/>
</dbReference>
<proteinExistence type="inferred from homology"/>
<sequence>MSHILAIDQGTTSSRAMVFDASLSLKSVAQEEFPQIYPRPGWVEHDPTDLWSSVAATARAAVERAEIDGSLAAIGITNQRETVVIWERATGHPIHNAIVWQDRRTADLCQSLAEAGQEPMITERTGLLLDPYFSATKVKWLLDHVEGARARARRGELLFGTVDSYLIWKLTGGRSHVTDATNAARTMLFDIRRGEWDAEICGLLDIPMEMLPEVKDCAAPFGMTRADLFGREIPILGVAGDQQAATCGQACFRPGMMKSTYGTGCFALLNTGAERVTSRSRLLTTIAYQLGGQRTYALEGSIFIAGAVVQWLRDGLKIIREAGETHGLATASDAAQDLVIVPAFTGLGAPWWKPDSRGAVFGLTRNSGPAEFARAALESVGYQTRDLLEAMRADWAAGAEGVLRVDGGMTASDWSMQFLADIIGAPVDRPVVRETTALGAAWLAGMQAGLCPGPEEFAAGWALERRFEPRMEAATRDAKYARWGRAVRAVMAV</sequence>
<keyword id="KW-0067">ATP-binding</keyword>
<keyword id="KW-0319">Glycerol metabolism</keyword>
<keyword id="KW-0418">Kinase</keyword>
<keyword id="KW-0547">Nucleotide-binding</keyword>
<keyword id="KW-0808">Transferase</keyword>